<keyword id="KW-0004">4Fe-4S</keyword>
<keyword id="KW-0235">DNA replication</keyword>
<keyword id="KW-0408">Iron</keyword>
<keyword id="KW-0411">Iron-sulfur</keyword>
<keyword id="KW-0479">Metal-binding</keyword>
<keyword id="KW-0639">Primosome</keyword>
<name>PRIL_HALS3</name>
<comment type="function">
    <text evidence="1">Regulatory subunit of DNA primase, an RNA polymerase that catalyzes the synthesis of short RNA molecules used as primers for DNA polymerase during DNA replication. Stabilizes and modulates the activity of the small subunit, increasing the rate of DNA synthesis, and conferring RNA synthesis capability. The DNA polymerase activity may enable DNA primase to also catalyze primer extension after primer synthesis. May also play a role in DNA repair.</text>
</comment>
<comment type="cofactor">
    <cofactor evidence="1">
        <name>[4Fe-4S] cluster</name>
        <dbReference type="ChEBI" id="CHEBI:49883"/>
    </cofactor>
    <text evidence="1">Binds 1 [4Fe-4S] cluster.</text>
</comment>
<comment type="subunit">
    <text evidence="1">Heterodimer of a small subunit (PriS) and a large subunit (PriL).</text>
</comment>
<comment type="similarity">
    <text evidence="1">Belongs to the eukaryotic-type primase large subunit family.</text>
</comment>
<proteinExistence type="inferred from homology"/>
<organism>
    <name type="scientific">Halobacterium salinarum (strain ATCC 29341 / DSM 671 / R1)</name>
    <dbReference type="NCBI Taxonomy" id="478009"/>
    <lineage>
        <taxon>Archaea</taxon>
        <taxon>Methanobacteriati</taxon>
        <taxon>Methanobacteriota</taxon>
        <taxon>Stenosarchaea group</taxon>
        <taxon>Halobacteria</taxon>
        <taxon>Halobacteriales</taxon>
        <taxon>Halobacteriaceae</taxon>
        <taxon>Halobacterium</taxon>
        <taxon>Halobacterium salinarum NRC-34001</taxon>
    </lineage>
</organism>
<evidence type="ECO:0000255" key="1">
    <source>
        <dbReference type="HAMAP-Rule" id="MF_00701"/>
    </source>
</evidence>
<evidence type="ECO:0000256" key="2">
    <source>
        <dbReference type="SAM" id="MobiDB-lite"/>
    </source>
</evidence>
<dbReference type="EMBL" id="AM774415">
    <property type="protein sequence ID" value="CAP14674.1"/>
    <property type="molecule type" value="Genomic_DNA"/>
</dbReference>
<dbReference type="RefSeq" id="WP_010903675.1">
    <property type="nucleotide sequence ID" value="NC_010364.1"/>
</dbReference>
<dbReference type="EnsemblBacteria" id="CAP14674">
    <property type="protein sequence ID" value="CAP14674"/>
    <property type="gene ID" value="OE_4163R"/>
</dbReference>
<dbReference type="GeneID" id="68694805"/>
<dbReference type="KEGG" id="hsl:OE_4163R"/>
<dbReference type="HOGENOM" id="CLU_052778_0_0_2"/>
<dbReference type="PhylomeDB" id="B0R7F5"/>
<dbReference type="Proteomes" id="UP000001321">
    <property type="component" value="Chromosome"/>
</dbReference>
<dbReference type="GO" id="GO:1990077">
    <property type="term" value="C:primosome complex"/>
    <property type="evidence" value="ECO:0007669"/>
    <property type="project" value="UniProtKB-KW"/>
</dbReference>
<dbReference type="GO" id="GO:0051539">
    <property type="term" value="F:4 iron, 4 sulfur cluster binding"/>
    <property type="evidence" value="ECO:0007669"/>
    <property type="project" value="UniProtKB-UniRule"/>
</dbReference>
<dbReference type="GO" id="GO:0003899">
    <property type="term" value="F:DNA-directed RNA polymerase activity"/>
    <property type="evidence" value="ECO:0007669"/>
    <property type="project" value="InterPro"/>
</dbReference>
<dbReference type="GO" id="GO:0046872">
    <property type="term" value="F:metal ion binding"/>
    <property type="evidence" value="ECO:0007669"/>
    <property type="project" value="UniProtKB-KW"/>
</dbReference>
<dbReference type="GO" id="GO:0006270">
    <property type="term" value="P:DNA replication initiation"/>
    <property type="evidence" value="ECO:0007669"/>
    <property type="project" value="TreeGrafter"/>
</dbReference>
<dbReference type="GO" id="GO:0006269">
    <property type="term" value="P:DNA replication, synthesis of primer"/>
    <property type="evidence" value="ECO:0007669"/>
    <property type="project" value="UniProtKB-UniRule"/>
</dbReference>
<dbReference type="CDD" id="cd06560">
    <property type="entry name" value="PriL"/>
    <property type="match status" value="1"/>
</dbReference>
<dbReference type="HAMAP" id="MF_00701">
    <property type="entry name" value="DNA_primase_lrg_arc"/>
    <property type="match status" value="1"/>
</dbReference>
<dbReference type="InterPro" id="IPR007238">
    <property type="entry name" value="DNA_primase_lsu_euk/arc"/>
</dbReference>
<dbReference type="InterPro" id="IPR023642">
    <property type="entry name" value="DNA_primase_lsu_PriL"/>
</dbReference>
<dbReference type="NCBIfam" id="NF002590">
    <property type="entry name" value="PRK02249.1-4"/>
    <property type="match status" value="1"/>
</dbReference>
<dbReference type="PANTHER" id="PTHR10537">
    <property type="entry name" value="DNA PRIMASE LARGE SUBUNIT"/>
    <property type="match status" value="1"/>
</dbReference>
<dbReference type="PANTHER" id="PTHR10537:SF3">
    <property type="entry name" value="DNA PRIMASE LARGE SUBUNIT"/>
    <property type="match status" value="1"/>
</dbReference>
<dbReference type="Pfam" id="PF04104">
    <property type="entry name" value="DNA_primase_lrg"/>
    <property type="match status" value="1"/>
</dbReference>
<dbReference type="SUPFAM" id="SSF140914">
    <property type="entry name" value="PriB N-terminal domain-like"/>
    <property type="match status" value="1"/>
</dbReference>
<gene>
    <name evidence="1" type="primary">priL</name>
    <name type="synonym">priB</name>
    <name type="ordered locus">OE_4163R</name>
</gene>
<sequence length="360" mass="39739">MNARHARYPFLGDARDAVEEAGVDLARVVTEDDAVVERARERVVSALTDGTIGEPAATVSTRVEVLSYPVARVLVSIVDESVLVRKYATAEADAAYDRFTADESTDTDLKSVSDTTRVSRDTLLSEFDLRAHVHATPDAHTVDVPTYLLLASSLRDDDWRLVNRALDDGRVPVTDAELDTLIREAIRERVADGLPLSVPDQIADALDEPVAAIQDALADLDLTREIDTVVPELFPPCMKHLLDQVQRGDHLPHHARFAITSFLSNVGLSTDEIVDIYEVNPGFGEEMTRYQTDHIQGDSSPTEYTAPSCATMKAYGNCVNPDDLCDAINHPLSYYEVKLDDGDDDDLADWRDREDDDSPD</sequence>
<accession>B0R7F5</accession>
<protein>
    <recommendedName>
        <fullName evidence="1">DNA primase large subunit PriL</fullName>
    </recommendedName>
</protein>
<feature type="chain" id="PRO_1000132351" description="DNA primase large subunit PriL">
    <location>
        <begin position="1"/>
        <end position="360"/>
    </location>
</feature>
<feature type="region of interest" description="Disordered" evidence="2">
    <location>
        <begin position="340"/>
        <end position="360"/>
    </location>
</feature>
<feature type="binding site" evidence="1">
    <location>
        <position position="237"/>
    </location>
    <ligand>
        <name>[4Fe-4S] cluster</name>
        <dbReference type="ChEBI" id="CHEBI:49883"/>
    </ligand>
</feature>
<feature type="binding site" evidence="1">
    <location>
        <position position="309"/>
    </location>
    <ligand>
        <name>[4Fe-4S] cluster</name>
        <dbReference type="ChEBI" id="CHEBI:49883"/>
    </ligand>
</feature>
<feature type="binding site" evidence="1">
    <location>
        <position position="318"/>
    </location>
    <ligand>
        <name>[4Fe-4S] cluster</name>
        <dbReference type="ChEBI" id="CHEBI:49883"/>
    </ligand>
</feature>
<feature type="binding site" evidence="1">
    <location>
        <position position="325"/>
    </location>
    <ligand>
        <name>[4Fe-4S] cluster</name>
        <dbReference type="ChEBI" id="CHEBI:49883"/>
    </ligand>
</feature>
<reference key="1">
    <citation type="journal article" date="2008" name="Genomics">
        <title>Evolution in the laboratory: the genome of Halobacterium salinarum strain R1 compared to that of strain NRC-1.</title>
        <authorList>
            <person name="Pfeiffer F."/>
            <person name="Schuster S.C."/>
            <person name="Broicher A."/>
            <person name="Falb M."/>
            <person name="Palm P."/>
            <person name="Rodewald K."/>
            <person name="Ruepp A."/>
            <person name="Soppa J."/>
            <person name="Tittor J."/>
            <person name="Oesterhelt D."/>
        </authorList>
    </citation>
    <scope>NUCLEOTIDE SEQUENCE [LARGE SCALE GENOMIC DNA]</scope>
    <source>
        <strain>ATCC 29341 / DSM 671 / R1</strain>
    </source>
</reference>